<accession>P16973</accession>
<feature type="chain" id="PRO_0000208855" description="Lysozyme C">
    <location>
        <begin position="1"/>
        <end position="130"/>
    </location>
</feature>
<feature type="domain" description="C-type lysozyme" evidence="1">
    <location>
        <begin position="1"/>
        <end position="130"/>
    </location>
</feature>
<feature type="active site" evidence="1">
    <location>
        <position position="35"/>
    </location>
</feature>
<feature type="active site" evidence="1">
    <location>
        <position position="53"/>
    </location>
</feature>
<feature type="disulfide bond" evidence="1">
    <location>
        <begin position="6"/>
        <end position="128"/>
    </location>
</feature>
<feature type="disulfide bond" evidence="1">
    <location>
        <begin position="30"/>
        <end position="116"/>
    </location>
</feature>
<feature type="disulfide bond" evidence="1">
    <location>
        <begin position="65"/>
        <end position="81"/>
    </location>
</feature>
<feature type="disulfide bond" evidence="1">
    <location>
        <begin position="77"/>
        <end position="95"/>
    </location>
</feature>
<sequence>KIYERCELARTLKKLGLDGYKGVSLANWMCLAKWESSYNTRATNYNPGDKSTDYGIFQINSRYWCNDGKTPRAVNACHIPCSDLLKDDITQAVACAKRVVSDPQGIRAWVAWRNHCQNQDLTPYIRGCGV</sequence>
<gene>
    <name type="primary">LYZ</name>
</gene>
<keyword id="KW-0929">Antimicrobial</keyword>
<keyword id="KW-0081">Bacteriolytic enzyme</keyword>
<keyword id="KW-0903">Direct protein sequencing</keyword>
<keyword id="KW-1015">Disulfide bond</keyword>
<keyword id="KW-0326">Glycosidase</keyword>
<keyword id="KW-0378">Hydrolase</keyword>
<keyword id="KW-1185">Reference proteome</keyword>
<keyword id="KW-0964">Secreted</keyword>
<name>LYSC_RABIT</name>
<dbReference type="EC" id="3.2.1.17"/>
<dbReference type="PIR" id="JC2506">
    <property type="entry name" value="JC2506"/>
</dbReference>
<dbReference type="PIR" id="JX0104">
    <property type="entry name" value="JX0104"/>
</dbReference>
<dbReference type="PIR" id="JX0367">
    <property type="entry name" value="JX0367"/>
</dbReference>
<dbReference type="SMR" id="P16973"/>
<dbReference type="FunCoup" id="P16973">
    <property type="interactions" value="42"/>
</dbReference>
<dbReference type="STRING" id="9986.ENSOCUP00000011947"/>
<dbReference type="CAZy" id="GH22">
    <property type="family name" value="Glycoside Hydrolase Family 22"/>
</dbReference>
<dbReference type="PaxDb" id="9986-ENSOCUP00000011947"/>
<dbReference type="eggNOG" id="ENOG502S1S1">
    <property type="taxonomic scope" value="Eukaryota"/>
</dbReference>
<dbReference type="InParanoid" id="P16973"/>
<dbReference type="Proteomes" id="UP000001811">
    <property type="component" value="Unplaced"/>
</dbReference>
<dbReference type="GO" id="GO:0005576">
    <property type="term" value="C:extracellular region"/>
    <property type="evidence" value="ECO:0007669"/>
    <property type="project" value="UniProtKB-SubCell"/>
</dbReference>
<dbReference type="GO" id="GO:0003796">
    <property type="term" value="F:lysozyme activity"/>
    <property type="evidence" value="ECO:0000314"/>
    <property type="project" value="CACAO"/>
</dbReference>
<dbReference type="GO" id="GO:0050829">
    <property type="term" value="P:defense response to Gram-negative bacterium"/>
    <property type="evidence" value="ECO:0007669"/>
    <property type="project" value="TreeGrafter"/>
</dbReference>
<dbReference type="GO" id="GO:0050830">
    <property type="term" value="P:defense response to Gram-positive bacterium"/>
    <property type="evidence" value="ECO:0007669"/>
    <property type="project" value="TreeGrafter"/>
</dbReference>
<dbReference type="GO" id="GO:0031640">
    <property type="term" value="P:killing of cells of another organism"/>
    <property type="evidence" value="ECO:0007669"/>
    <property type="project" value="UniProtKB-KW"/>
</dbReference>
<dbReference type="CDD" id="cd16897">
    <property type="entry name" value="LYZ_C"/>
    <property type="match status" value="1"/>
</dbReference>
<dbReference type="FunFam" id="1.10.530.10:FF:000001">
    <property type="entry name" value="Lysozyme C"/>
    <property type="match status" value="1"/>
</dbReference>
<dbReference type="Gene3D" id="1.10.530.10">
    <property type="match status" value="1"/>
</dbReference>
<dbReference type="InterPro" id="IPR001916">
    <property type="entry name" value="Glyco_hydro_22"/>
</dbReference>
<dbReference type="InterPro" id="IPR019799">
    <property type="entry name" value="Glyco_hydro_22_CS"/>
</dbReference>
<dbReference type="InterPro" id="IPR000974">
    <property type="entry name" value="Glyco_hydro_22_lys"/>
</dbReference>
<dbReference type="InterPro" id="IPR023346">
    <property type="entry name" value="Lysozyme-like_dom_sf"/>
</dbReference>
<dbReference type="PANTHER" id="PTHR11407">
    <property type="entry name" value="LYSOZYME C"/>
    <property type="match status" value="1"/>
</dbReference>
<dbReference type="PANTHER" id="PTHR11407:SF28">
    <property type="entry name" value="LYSOZYME C"/>
    <property type="match status" value="1"/>
</dbReference>
<dbReference type="Pfam" id="PF00062">
    <property type="entry name" value="Lys"/>
    <property type="match status" value="1"/>
</dbReference>
<dbReference type="PRINTS" id="PR00137">
    <property type="entry name" value="LYSOZYME"/>
</dbReference>
<dbReference type="PRINTS" id="PR00135">
    <property type="entry name" value="LYZLACT"/>
</dbReference>
<dbReference type="SMART" id="SM00263">
    <property type="entry name" value="LYZ1"/>
    <property type="match status" value="1"/>
</dbReference>
<dbReference type="SUPFAM" id="SSF53955">
    <property type="entry name" value="Lysozyme-like"/>
    <property type="match status" value="1"/>
</dbReference>
<dbReference type="PROSITE" id="PS00128">
    <property type="entry name" value="GLYCOSYL_HYDROL_F22_1"/>
    <property type="match status" value="1"/>
</dbReference>
<dbReference type="PROSITE" id="PS51348">
    <property type="entry name" value="GLYCOSYL_HYDROL_F22_2"/>
    <property type="match status" value="1"/>
</dbReference>
<organism>
    <name type="scientific">Oryctolagus cuniculus</name>
    <name type="common">Rabbit</name>
    <dbReference type="NCBI Taxonomy" id="9986"/>
    <lineage>
        <taxon>Eukaryota</taxon>
        <taxon>Metazoa</taxon>
        <taxon>Chordata</taxon>
        <taxon>Craniata</taxon>
        <taxon>Vertebrata</taxon>
        <taxon>Euteleostomi</taxon>
        <taxon>Mammalia</taxon>
        <taxon>Eutheria</taxon>
        <taxon>Euarchontoglires</taxon>
        <taxon>Glires</taxon>
        <taxon>Lagomorpha</taxon>
        <taxon>Leporidae</taxon>
        <taxon>Oryctolagus</taxon>
    </lineage>
</organism>
<reference key="1">
    <citation type="journal article" date="1990" name="J. Biochem.">
        <title>Purification, amino acid sequence, and some properties of rabbit kidney lysozyme.</title>
        <authorList>
            <person name="Ito Y."/>
            <person name="Yamada H."/>
            <person name="Nakamura S."/>
            <person name="Imoto T."/>
        </authorList>
    </citation>
    <scope>PROTEIN SEQUENCE</scope>
    <source>
        <tissue>Kidney</tissue>
    </source>
</reference>
<protein>
    <recommendedName>
        <fullName>Lysozyme C</fullName>
        <ecNumber>3.2.1.17</ecNumber>
    </recommendedName>
    <alternativeName>
        <fullName>1,4-beta-N-acetylmuramidase C</fullName>
    </alternativeName>
</protein>
<comment type="function">
    <text>Lysozymes have primarily a bacteriolytic function; those in tissues and body fluids are associated with the monocyte-macrophage system and enhance the activity of immunoagents.</text>
</comment>
<comment type="catalytic activity">
    <reaction>
        <text>Hydrolysis of (1-&gt;4)-beta-linkages between N-acetylmuramic acid and N-acetyl-D-glucosamine residues in a peptidoglycan and between N-acetyl-D-glucosamine residues in chitodextrins.</text>
        <dbReference type="EC" id="3.2.1.17"/>
    </reaction>
</comment>
<comment type="subunit">
    <text>Monomer.</text>
</comment>
<comment type="subcellular location">
    <subcellularLocation>
        <location>Secreted</location>
    </subcellularLocation>
</comment>
<comment type="miscellaneous">
    <text>Lysozyme C is capable of both hydrolysis and transglycosylation; it also shows a slight esterase activity. It acts rapidly on both peptide-substituted and unsubstituted peptidoglycan, and slowly on chitin oligosaccharides.</text>
</comment>
<comment type="similarity">
    <text evidence="1">Belongs to the glycosyl hydrolase 22 family.</text>
</comment>
<evidence type="ECO:0000255" key="1">
    <source>
        <dbReference type="PROSITE-ProRule" id="PRU00680"/>
    </source>
</evidence>
<proteinExistence type="evidence at protein level"/>